<gene>
    <name evidence="1" type="primary">efp</name>
    <name type="ordered locus">NGR_c36150</name>
</gene>
<accession>C3MCN8</accession>
<sequence length="189" mass="20894">MVKVIASSVRKGNVLDVDGKLYVVLTAQNFHPGKGTPVTQVDMRRISDGVKVSERYRTTEQVERAFVEDREHTFLYEDAEGFHFMNPESYDQLVMSADDIGDLKAYLQEGMAVMLSIHEGIAIAIDLPRHVTLEITETEPVVKGQTASSSYKPALLSNGVRTSVPPHIQAGTRVVIATEDGSYVERAKD</sequence>
<keyword id="KW-0963">Cytoplasm</keyword>
<keyword id="KW-0251">Elongation factor</keyword>
<keyword id="KW-0648">Protein biosynthesis</keyword>
<keyword id="KW-1185">Reference proteome</keyword>
<feature type="chain" id="PRO_1000123022" description="Elongation factor P">
    <location>
        <begin position="1"/>
        <end position="189"/>
    </location>
</feature>
<proteinExistence type="inferred from homology"/>
<name>EFP_SINFN</name>
<protein>
    <recommendedName>
        <fullName evidence="1">Elongation factor P</fullName>
        <shortName evidence="1">EF-P</shortName>
    </recommendedName>
</protein>
<reference key="1">
    <citation type="journal article" date="2009" name="Appl. Environ. Microbiol.">
        <title>Rhizobium sp. strain NGR234 possesses a remarkable number of secretion systems.</title>
        <authorList>
            <person name="Schmeisser C."/>
            <person name="Liesegang H."/>
            <person name="Krysciak D."/>
            <person name="Bakkou N."/>
            <person name="Le Quere A."/>
            <person name="Wollherr A."/>
            <person name="Heinemeyer I."/>
            <person name="Morgenstern B."/>
            <person name="Pommerening-Roeser A."/>
            <person name="Flores M."/>
            <person name="Palacios R."/>
            <person name="Brenner S."/>
            <person name="Gottschalk G."/>
            <person name="Schmitz R.A."/>
            <person name="Broughton W.J."/>
            <person name="Perret X."/>
            <person name="Strittmatter A.W."/>
            <person name="Streit W.R."/>
        </authorList>
    </citation>
    <scope>NUCLEOTIDE SEQUENCE [LARGE SCALE GENOMIC DNA]</scope>
    <source>
        <strain>NBRC 101917 / NGR234</strain>
    </source>
</reference>
<evidence type="ECO:0000255" key="1">
    <source>
        <dbReference type="HAMAP-Rule" id="MF_00141"/>
    </source>
</evidence>
<comment type="function">
    <text evidence="1">Involved in peptide bond synthesis. Stimulates efficient translation and peptide-bond synthesis on native or reconstituted 70S ribosomes in vitro. Probably functions indirectly by altering the affinity of the ribosome for aminoacyl-tRNA, thus increasing their reactivity as acceptors for peptidyl transferase.</text>
</comment>
<comment type="pathway">
    <text evidence="1">Protein biosynthesis; polypeptide chain elongation.</text>
</comment>
<comment type="subcellular location">
    <subcellularLocation>
        <location evidence="1">Cytoplasm</location>
    </subcellularLocation>
</comment>
<comment type="similarity">
    <text evidence="1">Belongs to the elongation factor P family.</text>
</comment>
<organism>
    <name type="scientific">Sinorhizobium fredii (strain NBRC 101917 / NGR234)</name>
    <dbReference type="NCBI Taxonomy" id="394"/>
    <lineage>
        <taxon>Bacteria</taxon>
        <taxon>Pseudomonadati</taxon>
        <taxon>Pseudomonadota</taxon>
        <taxon>Alphaproteobacteria</taxon>
        <taxon>Hyphomicrobiales</taxon>
        <taxon>Rhizobiaceae</taxon>
        <taxon>Sinorhizobium/Ensifer group</taxon>
        <taxon>Sinorhizobium</taxon>
    </lineage>
</organism>
<dbReference type="EMBL" id="CP001389">
    <property type="protein sequence ID" value="ACP27336.1"/>
    <property type="molecule type" value="Genomic_DNA"/>
</dbReference>
<dbReference type="RefSeq" id="WP_012710080.1">
    <property type="nucleotide sequence ID" value="NC_012587.1"/>
</dbReference>
<dbReference type="RefSeq" id="YP_002828089.1">
    <property type="nucleotide sequence ID" value="NC_012587.1"/>
</dbReference>
<dbReference type="SMR" id="C3MCN8"/>
<dbReference type="STRING" id="394.NGR_c36150"/>
<dbReference type="KEGG" id="rhi:NGR_c36150"/>
<dbReference type="PATRIC" id="fig|394.7.peg.6467"/>
<dbReference type="eggNOG" id="COG0231">
    <property type="taxonomic scope" value="Bacteria"/>
</dbReference>
<dbReference type="HOGENOM" id="CLU_074944_1_1_5"/>
<dbReference type="OrthoDB" id="9801844at2"/>
<dbReference type="UniPathway" id="UPA00345"/>
<dbReference type="Proteomes" id="UP000001054">
    <property type="component" value="Chromosome"/>
</dbReference>
<dbReference type="GO" id="GO:0005737">
    <property type="term" value="C:cytoplasm"/>
    <property type="evidence" value="ECO:0007669"/>
    <property type="project" value="UniProtKB-SubCell"/>
</dbReference>
<dbReference type="GO" id="GO:0003746">
    <property type="term" value="F:translation elongation factor activity"/>
    <property type="evidence" value="ECO:0007669"/>
    <property type="project" value="UniProtKB-UniRule"/>
</dbReference>
<dbReference type="GO" id="GO:0043043">
    <property type="term" value="P:peptide biosynthetic process"/>
    <property type="evidence" value="ECO:0007669"/>
    <property type="project" value="InterPro"/>
</dbReference>
<dbReference type="CDD" id="cd04470">
    <property type="entry name" value="S1_EF-P_repeat_1"/>
    <property type="match status" value="1"/>
</dbReference>
<dbReference type="CDD" id="cd05794">
    <property type="entry name" value="S1_EF-P_repeat_2"/>
    <property type="match status" value="1"/>
</dbReference>
<dbReference type="FunFam" id="2.40.50.140:FF:000004">
    <property type="entry name" value="Elongation factor P"/>
    <property type="match status" value="1"/>
</dbReference>
<dbReference type="FunFam" id="2.40.50.140:FF:000009">
    <property type="entry name" value="Elongation factor P"/>
    <property type="match status" value="1"/>
</dbReference>
<dbReference type="Gene3D" id="2.30.30.30">
    <property type="match status" value="1"/>
</dbReference>
<dbReference type="Gene3D" id="2.40.50.140">
    <property type="entry name" value="Nucleic acid-binding proteins"/>
    <property type="match status" value="2"/>
</dbReference>
<dbReference type="HAMAP" id="MF_00141">
    <property type="entry name" value="EF_P"/>
    <property type="match status" value="1"/>
</dbReference>
<dbReference type="InterPro" id="IPR015365">
    <property type="entry name" value="Elong-fact-P_C"/>
</dbReference>
<dbReference type="InterPro" id="IPR012340">
    <property type="entry name" value="NA-bd_OB-fold"/>
</dbReference>
<dbReference type="InterPro" id="IPR014722">
    <property type="entry name" value="Rib_uL2_dom2"/>
</dbReference>
<dbReference type="InterPro" id="IPR020599">
    <property type="entry name" value="Transl_elong_fac_P/YeiP"/>
</dbReference>
<dbReference type="InterPro" id="IPR013185">
    <property type="entry name" value="Transl_elong_KOW-like"/>
</dbReference>
<dbReference type="InterPro" id="IPR001059">
    <property type="entry name" value="Transl_elong_P/YeiP_cen"/>
</dbReference>
<dbReference type="InterPro" id="IPR013852">
    <property type="entry name" value="Transl_elong_P/YeiP_CS"/>
</dbReference>
<dbReference type="InterPro" id="IPR011768">
    <property type="entry name" value="Transl_elongation_fac_P"/>
</dbReference>
<dbReference type="InterPro" id="IPR008991">
    <property type="entry name" value="Translation_prot_SH3-like_sf"/>
</dbReference>
<dbReference type="NCBIfam" id="TIGR00038">
    <property type="entry name" value="efp"/>
    <property type="match status" value="1"/>
</dbReference>
<dbReference type="NCBIfam" id="NF001810">
    <property type="entry name" value="PRK00529.1"/>
    <property type="match status" value="1"/>
</dbReference>
<dbReference type="PANTHER" id="PTHR30053">
    <property type="entry name" value="ELONGATION FACTOR P"/>
    <property type="match status" value="1"/>
</dbReference>
<dbReference type="PANTHER" id="PTHR30053:SF14">
    <property type="entry name" value="TRANSLATION ELONGATION FACTOR KOW-LIKE DOMAIN-CONTAINING PROTEIN"/>
    <property type="match status" value="1"/>
</dbReference>
<dbReference type="Pfam" id="PF01132">
    <property type="entry name" value="EFP"/>
    <property type="match status" value="1"/>
</dbReference>
<dbReference type="Pfam" id="PF08207">
    <property type="entry name" value="EFP_N"/>
    <property type="match status" value="1"/>
</dbReference>
<dbReference type="Pfam" id="PF09285">
    <property type="entry name" value="Elong-fact-P_C"/>
    <property type="match status" value="1"/>
</dbReference>
<dbReference type="PIRSF" id="PIRSF005901">
    <property type="entry name" value="EF-P"/>
    <property type="match status" value="1"/>
</dbReference>
<dbReference type="SMART" id="SM01185">
    <property type="entry name" value="EFP"/>
    <property type="match status" value="1"/>
</dbReference>
<dbReference type="SMART" id="SM00841">
    <property type="entry name" value="Elong-fact-P_C"/>
    <property type="match status" value="1"/>
</dbReference>
<dbReference type="SUPFAM" id="SSF50249">
    <property type="entry name" value="Nucleic acid-binding proteins"/>
    <property type="match status" value="2"/>
</dbReference>
<dbReference type="SUPFAM" id="SSF50104">
    <property type="entry name" value="Translation proteins SH3-like domain"/>
    <property type="match status" value="1"/>
</dbReference>
<dbReference type="PROSITE" id="PS01275">
    <property type="entry name" value="EFP"/>
    <property type="match status" value="1"/>
</dbReference>